<protein>
    <recommendedName>
        <fullName evidence="1">ATP-dependent Clp protease adapter protein ClpS</fullName>
    </recommendedName>
</protein>
<keyword id="KW-1185">Reference proteome</keyword>
<dbReference type="EMBL" id="CP000034">
    <property type="protein sequence ID" value="ABB62454.1"/>
    <property type="molecule type" value="Genomic_DNA"/>
</dbReference>
<dbReference type="RefSeq" id="WP_000520781.1">
    <property type="nucleotide sequence ID" value="NC_007606.1"/>
</dbReference>
<dbReference type="RefSeq" id="YP_403945.1">
    <property type="nucleotide sequence ID" value="NC_007606.1"/>
</dbReference>
<dbReference type="SMR" id="Q32E01"/>
<dbReference type="STRING" id="300267.SDY_2380"/>
<dbReference type="EnsemblBacteria" id="ABB62454">
    <property type="protein sequence ID" value="ABB62454"/>
    <property type="gene ID" value="SDY_2380"/>
</dbReference>
<dbReference type="GeneID" id="86863397"/>
<dbReference type="KEGG" id="sdy:SDY_2380"/>
<dbReference type="PATRIC" id="fig|300267.13.peg.2873"/>
<dbReference type="HOGENOM" id="CLU_134358_2_1_6"/>
<dbReference type="Proteomes" id="UP000002716">
    <property type="component" value="Chromosome"/>
</dbReference>
<dbReference type="GO" id="GO:0030163">
    <property type="term" value="P:protein catabolic process"/>
    <property type="evidence" value="ECO:0007669"/>
    <property type="project" value="InterPro"/>
</dbReference>
<dbReference type="GO" id="GO:0006508">
    <property type="term" value="P:proteolysis"/>
    <property type="evidence" value="ECO:0007669"/>
    <property type="project" value="UniProtKB-UniRule"/>
</dbReference>
<dbReference type="FunFam" id="3.30.1390.10:FF:000002">
    <property type="entry name" value="ATP-dependent Clp protease adapter protein ClpS"/>
    <property type="match status" value="1"/>
</dbReference>
<dbReference type="Gene3D" id="3.30.1390.10">
    <property type="match status" value="1"/>
</dbReference>
<dbReference type="HAMAP" id="MF_00302">
    <property type="entry name" value="ClpS"/>
    <property type="match status" value="1"/>
</dbReference>
<dbReference type="InterPro" id="IPR022935">
    <property type="entry name" value="ClpS"/>
</dbReference>
<dbReference type="InterPro" id="IPR003769">
    <property type="entry name" value="ClpS_core"/>
</dbReference>
<dbReference type="InterPro" id="IPR014719">
    <property type="entry name" value="Ribosomal_bL12_C/ClpS-like"/>
</dbReference>
<dbReference type="NCBIfam" id="NF000670">
    <property type="entry name" value="PRK00033.1-3"/>
    <property type="match status" value="1"/>
</dbReference>
<dbReference type="NCBIfam" id="NF000672">
    <property type="entry name" value="PRK00033.1-5"/>
    <property type="match status" value="1"/>
</dbReference>
<dbReference type="PANTHER" id="PTHR33473:SF19">
    <property type="entry name" value="ATP-DEPENDENT CLP PROTEASE ADAPTER PROTEIN CLPS"/>
    <property type="match status" value="1"/>
</dbReference>
<dbReference type="PANTHER" id="PTHR33473">
    <property type="entry name" value="ATP-DEPENDENT CLP PROTEASE ADAPTER PROTEIN CLPS1, CHLOROPLASTIC"/>
    <property type="match status" value="1"/>
</dbReference>
<dbReference type="Pfam" id="PF02617">
    <property type="entry name" value="ClpS"/>
    <property type="match status" value="1"/>
</dbReference>
<dbReference type="SUPFAM" id="SSF54736">
    <property type="entry name" value="ClpS-like"/>
    <property type="match status" value="1"/>
</dbReference>
<reference key="1">
    <citation type="journal article" date="2005" name="Nucleic Acids Res.">
        <title>Genome dynamics and diversity of Shigella species, the etiologic agents of bacillary dysentery.</title>
        <authorList>
            <person name="Yang F."/>
            <person name="Yang J."/>
            <person name="Zhang X."/>
            <person name="Chen L."/>
            <person name="Jiang Y."/>
            <person name="Yan Y."/>
            <person name="Tang X."/>
            <person name="Wang J."/>
            <person name="Xiong Z."/>
            <person name="Dong J."/>
            <person name="Xue Y."/>
            <person name="Zhu Y."/>
            <person name="Xu X."/>
            <person name="Sun L."/>
            <person name="Chen S."/>
            <person name="Nie H."/>
            <person name="Peng J."/>
            <person name="Xu J."/>
            <person name="Wang Y."/>
            <person name="Yuan Z."/>
            <person name="Wen Y."/>
            <person name="Yao Z."/>
            <person name="Shen Y."/>
            <person name="Qiang B."/>
            <person name="Hou Y."/>
            <person name="Yu J."/>
            <person name="Jin Q."/>
        </authorList>
    </citation>
    <scope>NUCLEOTIDE SEQUENCE [LARGE SCALE GENOMIC DNA]</scope>
    <source>
        <strain>Sd197</strain>
    </source>
</reference>
<feature type="chain" id="PRO_0000300726" description="ATP-dependent Clp protease adapter protein ClpS">
    <location>
        <begin position="1"/>
        <end position="106"/>
    </location>
</feature>
<accession>Q32E01</accession>
<evidence type="ECO:0000255" key="1">
    <source>
        <dbReference type="HAMAP-Rule" id="MF_00302"/>
    </source>
</evidence>
<gene>
    <name evidence="1" type="primary">clpS</name>
    <name type="ordered locus">SDY_2380</name>
</gene>
<sequence>MGKTNDWLDFDQLAEEKVRDALKPPSMYKVILVNDDYTPMEFVIDVLQKFFSYDVERATQLMLAVHYQGKAICGVFTAEVAETKVAMVNKYARENEHPLLCTLEKA</sequence>
<organism>
    <name type="scientific">Shigella dysenteriae serotype 1 (strain Sd197)</name>
    <dbReference type="NCBI Taxonomy" id="300267"/>
    <lineage>
        <taxon>Bacteria</taxon>
        <taxon>Pseudomonadati</taxon>
        <taxon>Pseudomonadota</taxon>
        <taxon>Gammaproteobacteria</taxon>
        <taxon>Enterobacterales</taxon>
        <taxon>Enterobacteriaceae</taxon>
        <taxon>Shigella</taxon>
    </lineage>
</organism>
<name>CLPS_SHIDS</name>
<comment type="function">
    <text evidence="1">Involved in the modulation of the specificity of the ClpAP-mediated ATP-dependent protein degradation.</text>
</comment>
<comment type="subunit">
    <text evidence="1">Binds to the N-terminal domain of the chaperone ClpA.</text>
</comment>
<comment type="similarity">
    <text evidence="1">Belongs to the ClpS family.</text>
</comment>
<proteinExistence type="inferred from homology"/>